<comment type="similarity">
    <text evidence="1">Belongs to the UPF0502 family.</text>
</comment>
<feature type="chain" id="PRO_0000382560" description="UPF0502 protein Gbem_0194">
    <location>
        <begin position="1"/>
        <end position="226"/>
    </location>
</feature>
<name>Y194_CITBB</name>
<reference key="1">
    <citation type="submission" date="2008-07" db="EMBL/GenBank/DDBJ databases">
        <title>Complete sequence of Geobacter bemidjiensis BEM.</title>
        <authorList>
            <consortium name="US DOE Joint Genome Institute"/>
            <person name="Lucas S."/>
            <person name="Copeland A."/>
            <person name="Lapidus A."/>
            <person name="Glavina del Rio T."/>
            <person name="Dalin E."/>
            <person name="Tice H."/>
            <person name="Bruce D."/>
            <person name="Goodwin L."/>
            <person name="Pitluck S."/>
            <person name="Kiss H."/>
            <person name="Brettin T."/>
            <person name="Detter J.C."/>
            <person name="Han C."/>
            <person name="Kuske C.R."/>
            <person name="Schmutz J."/>
            <person name="Larimer F."/>
            <person name="Land M."/>
            <person name="Hauser L."/>
            <person name="Kyrpides N."/>
            <person name="Lykidis A."/>
            <person name="Lovley D."/>
            <person name="Richardson P."/>
        </authorList>
    </citation>
    <scope>NUCLEOTIDE SEQUENCE [LARGE SCALE GENOMIC DNA]</scope>
    <source>
        <strain>ATCC BAA-1014 / DSM 16622 / JCM 12645 / Bem</strain>
    </source>
</reference>
<gene>
    <name type="ordered locus">Gbem_0194</name>
</gene>
<evidence type="ECO:0000255" key="1">
    <source>
        <dbReference type="HAMAP-Rule" id="MF_01584"/>
    </source>
</evidence>
<dbReference type="EMBL" id="CP001124">
    <property type="protein sequence ID" value="ACH37225.1"/>
    <property type="molecule type" value="Genomic_DNA"/>
</dbReference>
<dbReference type="RefSeq" id="WP_012528633.1">
    <property type="nucleotide sequence ID" value="NC_011146.1"/>
</dbReference>
<dbReference type="SMR" id="B5E988"/>
<dbReference type="KEGG" id="gbm:Gbem_0194"/>
<dbReference type="eggNOG" id="COG3132">
    <property type="taxonomic scope" value="Bacteria"/>
</dbReference>
<dbReference type="HOGENOM" id="CLU_057831_1_0_7"/>
<dbReference type="OrthoDB" id="9784785at2"/>
<dbReference type="Proteomes" id="UP000008825">
    <property type="component" value="Chromosome"/>
</dbReference>
<dbReference type="Gene3D" id="1.10.10.10">
    <property type="entry name" value="Winged helix-like DNA-binding domain superfamily/Winged helix DNA-binding domain"/>
    <property type="match status" value="2"/>
</dbReference>
<dbReference type="HAMAP" id="MF_01584">
    <property type="entry name" value="UPF0502"/>
    <property type="match status" value="1"/>
</dbReference>
<dbReference type="InterPro" id="IPR007432">
    <property type="entry name" value="DUF480"/>
</dbReference>
<dbReference type="InterPro" id="IPR036388">
    <property type="entry name" value="WH-like_DNA-bd_sf"/>
</dbReference>
<dbReference type="InterPro" id="IPR036390">
    <property type="entry name" value="WH_DNA-bd_sf"/>
</dbReference>
<dbReference type="PANTHER" id="PTHR38768">
    <property type="entry name" value="UPF0502 PROTEIN YCEH"/>
    <property type="match status" value="1"/>
</dbReference>
<dbReference type="PANTHER" id="PTHR38768:SF1">
    <property type="entry name" value="UPF0502 PROTEIN YCEH"/>
    <property type="match status" value="1"/>
</dbReference>
<dbReference type="Pfam" id="PF04337">
    <property type="entry name" value="DUF480"/>
    <property type="match status" value="1"/>
</dbReference>
<dbReference type="SUPFAM" id="SSF46785">
    <property type="entry name" value="Winged helix' DNA-binding domain"/>
    <property type="match status" value="2"/>
</dbReference>
<keyword id="KW-1185">Reference proteome</keyword>
<accession>B5E988</accession>
<proteinExistence type="inferred from homology"/>
<organism>
    <name type="scientific">Citrifermentans bemidjiense (strain ATCC BAA-1014 / DSM 16622 / JCM 12645 / Bem)</name>
    <name type="common">Geobacter bemidjiensis</name>
    <dbReference type="NCBI Taxonomy" id="404380"/>
    <lineage>
        <taxon>Bacteria</taxon>
        <taxon>Pseudomonadati</taxon>
        <taxon>Thermodesulfobacteriota</taxon>
        <taxon>Desulfuromonadia</taxon>
        <taxon>Geobacterales</taxon>
        <taxon>Geobacteraceae</taxon>
        <taxon>Citrifermentans</taxon>
    </lineage>
</organism>
<protein>
    <recommendedName>
        <fullName evidence="1">UPF0502 protein Gbem_0194</fullName>
    </recommendedName>
</protein>
<sequence length="226" mass="24932">MRMNLSELEIRILGCLMEKELATPEIYPLTLNALASACNQKSNRDPVMSVTEADLLRGLEALGARGLARLTTTGGRVAKYCHSATDNLRLAAAERAVLAELMLRGAQTAAELRSRGERMTEMGDIESVEETLRKLQQHGPPLVVRLPRQPGRKEQRYLQVFAGLPEFPDELDISEEMEPAAGPRAAAGRPAVGNERLERLEEGIGSLRQEIAALRREVQEMMDAFA</sequence>